<keyword id="KW-1185">Reference proteome</keyword>
<keyword id="KW-0687">Ribonucleoprotein</keyword>
<keyword id="KW-0689">Ribosomal protein</keyword>
<keyword id="KW-0694">RNA-binding</keyword>
<keyword id="KW-0699">rRNA-binding</keyword>
<dbReference type="EMBL" id="CP001124">
    <property type="protein sequence ID" value="ACH39767.1"/>
    <property type="molecule type" value="Genomic_DNA"/>
</dbReference>
<dbReference type="RefSeq" id="WP_012531193.1">
    <property type="nucleotide sequence ID" value="NC_011146.1"/>
</dbReference>
<dbReference type="SMR" id="B5EHW8"/>
<dbReference type="STRING" id="404380.Gbem_2763"/>
<dbReference type="KEGG" id="gbm:Gbem_2763"/>
<dbReference type="eggNOG" id="COG0238">
    <property type="taxonomic scope" value="Bacteria"/>
</dbReference>
<dbReference type="HOGENOM" id="CLU_148710_2_2_7"/>
<dbReference type="OrthoDB" id="9812008at2"/>
<dbReference type="Proteomes" id="UP000008825">
    <property type="component" value="Chromosome"/>
</dbReference>
<dbReference type="GO" id="GO:0022627">
    <property type="term" value="C:cytosolic small ribosomal subunit"/>
    <property type="evidence" value="ECO:0007669"/>
    <property type="project" value="TreeGrafter"/>
</dbReference>
<dbReference type="GO" id="GO:0070181">
    <property type="term" value="F:small ribosomal subunit rRNA binding"/>
    <property type="evidence" value="ECO:0007669"/>
    <property type="project" value="TreeGrafter"/>
</dbReference>
<dbReference type="GO" id="GO:0003735">
    <property type="term" value="F:structural constituent of ribosome"/>
    <property type="evidence" value="ECO:0007669"/>
    <property type="project" value="InterPro"/>
</dbReference>
<dbReference type="GO" id="GO:0006412">
    <property type="term" value="P:translation"/>
    <property type="evidence" value="ECO:0007669"/>
    <property type="project" value="UniProtKB-UniRule"/>
</dbReference>
<dbReference type="FunFam" id="4.10.640.10:FF:000004">
    <property type="entry name" value="30S ribosomal protein S18"/>
    <property type="match status" value="1"/>
</dbReference>
<dbReference type="Gene3D" id="4.10.640.10">
    <property type="entry name" value="Ribosomal protein S18"/>
    <property type="match status" value="1"/>
</dbReference>
<dbReference type="HAMAP" id="MF_00270">
    <property type="entry name" value="Ribosomal_bS18"/>
    <property type="match status" value="1"/>
</dbReference>
<dbReference type="InterPro" id="IPR001648">
    <property type="entry name" value="Ribosomal_bS18"/>
</dbReference>
<dbReference type="InterPro" id="IPR018275">
    <property type="entry name" value="Ribosomal_bS18_CS"/>
</dbReference>
<dbReference type="InterPro" id="IPR036870">
    <property type="entry name" value="Ribosomal_bS18_sf"/>
</dbReference>
<dbReference type="NCBIfam" id="TIGR00165">
    <property type="entry name" value="S18"/>
    <property type="match status" value="1"/>
</dbReference>
<dbReference type="PANTHER" id="PTHR13479">
    <property type="entry name" value="30S RIBOSOMAL PROTEIN S18"/>
    <property type="match status" value="1"/>
</dbReference>
<dbReference type="PANTHER" id="PTHR13479:SF40">
    <property type="entry name" value="SMALL RIBOSOMAL SUBUNIT PROTEIN BS18M"/>
    <property type="match status" value="1"/>
</dbReference>
<dbReference type="Pfam" id="PF01084">
    <property type="entry name" value="Ribosomal_S18"/>
    <property type="match status" value="1"/>
</dbReference>
<dbReference type="PRINTS" id="PR00974">
    <property type="entry name" value="RIBOSOMALS18"/>
</dbReference>
<dbReference type="SUPFAM" id="SSF46911">
    <property type="entry name" value="Ribosomal protein S18"/>
    <property type="match status" value="1"/>
</dbReference>
<dbReference type="PROSITE" id="PS00057">
    <property type="entry name" value="RIBOSOMAL_S18"/>
    <property type="match status" value="1"/>
</dbReference>
<proteinExistence type="inferred from homology"/>
<gene>
    <name evidence="1" type="primary">rpsR</name>
    <name type="ordered locus">Gbem_2763</name>
</gene>
<evidence type="ECO:0000255" key="1">
    <source>
        <dbReference type="HAMAP-Rule" id="MF_00270"/>
    </source>
</evidence>
<evidence type="ECO:0000256" key="2">
    <source>
        <dbReference type="SAM" id="MobiDB-lite"/>
    </source>
</evidence>
<evidence type="ECO:0000305" key="3"/>
<reference key="1">
    <citation type="submission" date="2008-07" db="EMBL/GenBank/DDBJ databases">
        <title>Complete sequence of Geobacter bemidjiensis BEM.</title>
        <authorList>
            <consortium name="US DOE Joint Genome Institute"/>
            <person name="Lucas S."/>
            <person name="Copeland A."/>
            <person name="Lapidus A."/>
            <person name="Glavina del Rio T."/>
            <person name="Dalin E."/>
            <person name="Tice H."/>
            <person name="Bruce D."/>
            <person name="Goodwin L."/>
            <person name="Pitluck S."/>
            <person name="Kiss H."/>
            <person name="Brettin T."/>
            <person name="Detter J.C."/>
            <person name="Han C."/>
            <person name="Kuske C.R."/>
            <person name="Schmutz J."/>
            <person name="Larimer F."/>
            <person name="Land M."/>
            <person name="Hauser L."/>
            <person name="Kyrpides N."/>
            <person name="Lykidis A."/>
            <person name="Lovley D."/>
            <person name="Richardson P."/>
        </authorList>
    </citation>
    <scope>NUCLEOTIDE SEQUENCE [LARGE SCALE GENOMIC DNA]</scope>
    <source>
        <strain>ATCC BAA-1014 / DSM 16622 / JCM 12645 / Bem</strain>
    </source>
</reference>
<name>RS18_CITBB</name>
<sequence>MADERAPQRSTSGPRKKRPFQRRKVCRFCADKQVTIDYKDPRTLRYFVSERGKIIPRRISGNCSKHQREITEAIKRARNIALLPIAGSHATA</sequence>
<comment type="function">
    <text evidence="1">Binds as a heterodimer with protein bS6 to the central domain of the 16S rRNA, where it helps stabilize the platform of the 30S subunit.</text>
</comment>
<comment type="subunit">
    <text evidence="1">Part of the 30S ribosomal subunit. Forms a tight heterodimer with protein bS6.</text>
</comment>
<comment type="similarity">
    <text evidence="1">Belongs to the bacterial ribosomal protein bS18 family.</text>
</comment>
<feature type="chain" id="PRO_1000119283" description="Small ribosomal subunit protein bS18">
    <location>
        <begin position="1"/>
        <end position="92"/>
    </location>
</feature>
<feature type="region of interest" description="Disordered" evidence="2">
    <location>
        <begin position="1"/>
        <end position="22"/>
    </location>
</feature>
<accession>B5EHW8</accession>
<organism>
    <name type="scientific">Citrifermentans bemidjiense (strain ATCC BAA-1014 / DSM 16622 / JCM 12645 / Bem)</name>
    <name type="common">Geobacter bemidjiensis</name>
    <dbReference type="NCBI Taxonomy" id="404380"/>
    <lineage>
        <taxon>Bacteria</taxon>
        <taxon>Pseudomonadati</taxon>
        <taxon>Thermodesulfobacteriota</taxon>
        <taxon>Desulfuromonadia</taxon>
        <taxon>Geobacterales</taxon>
        <taxon>Geobacteraceae</taxon>
        <taxon>Citrifermentans</taxon>
    </lineage>
</organism>
<protein>
    <recommendedName>
        <fullName evidence="1">Small ribosomal subunit protein bS18</fullName>
    </recommendedName>
    <alternativeName>
        <fullName evidence="3">30S ribosomal protein S18</fullName>
    </alternativeName>
</protein>